<keyword id="KW-0002">3D-structure</keyword>
<keyword id="KW-1185">Reference proteome</keyword>
<keyword id="KW-0687">Ribonucleoprotein</keyword>
<keyword id="KW-0689">Ribosomal protein</keyword>
<accession>P75239</accession>
<name>RL7_MYCPN</name>
<reference key="1">
    <citation type="journal article" date="1996" name="Nucleic Acids Res.">
        <title>Complete sequence analysis of the genome of the bacterium Mycoplasma pneumoniae.</title>
        <authorList>
            <person name="Himmelreich R."/>
            <person name="Hilbert H."/>
            <person name="Plagens H."/>
            <person name="Pirkl E."/>
            <person name="Li B.-C."/>
            <person name="Herrmann R."/>
        </authorList>
    </citation>
    <scope>NUCLEOTIDE SEQUENCE [LARGE SCALE GENOMIC DNA]</scope>
    <source>
        <strain>ATCC 29342 / M129 / Subtype 1</strain>
    </source>
</reference>
<proteinExistence type="evidence at protein level"/>
<comment type="function">
    <text evidence="1">Forms part of the ribosomal stalk which helps the ribosome interact with GTP-bound translation factors. Is thus essential for accurate translation.</text>
</comment>
<comment type="subunit">
    <text evidence="1">Homodimer. Part of the ribosomal stalk of the 50S ribosomal subunit. Forms a multimeric L10(L12)X complex, where L10 forms an elongated spine to which 2 to 4 L12 dimers bind in a sequential fashion. Binds GTP-bound translation factors.</text>
</comment>
<comment type="similarity">
    <text evidence="1">Belongs to the bacterial ribosomal protein bL12 family.</text>
</comment>
<protein>
    <recommendedName>
        <fullName evidence="1">Large ribosomal subunit protein bL12</fullName>
    </recommendedName>
    <alternativeName>
        <fullName evidence="2">50S ribosomal protein L7/L12</fullName>
    </alternativeName>
</protein>
<dbReference type="EMBL" id="U00089">
    <property type="protein sequence ID" value="AAB95951.1"/>
    <property type="molecule type" value="Genomic_DNA"/>
</dbReference>
<dbReference type="PIR" id="S73629">
    <property type="entry name" value="S73629"/>
</dbReference>
<dbReference type="RefSeq" id="NP_110228.1">
    <property type="nucleotide sequence ID" value="NC_000912.1"/>
</dbReference>
<dbReference type="RefSeq" id="WP_010874896.1">
    <property type="nucleotide sequence ID" value="NC_000912.1"/>
</dbReference>
<dbReference type="PDB" id="7PAO">
    <property type="method" value="EM"/>
    <property type="resolution" value="7.00 A"/>
    <property type="chains" value="W=1-122"/>
</dbReference>
<dbReference type="PDB" id="7PAQ">
    <property type="method" value="EM"/>
    <property type="resolution" value="8.90 A"/>
    <property type="chains" value="W=1-122"/>
</dbReference>
<dbReference type="PDB" id="7PAR">
    <property type="method" value="EM"/>
    <property type="resolution" value="8.20 A"/>
    <property type="chains" value="W=1-122"/>
</dbReference>
<dbReference type="PDB" id="7PIB">
    <property type="method" value="EM"/>
    <property type="resolution" value="4.70 A"/>
    <property type="chains" value="W=1-122"/>
</dbReference>
<dbReference type="PDB" id="7PIS">
    <property type="method" value="EM"/>
    <property type="resolution" value="15.00 A"/>
    <property type="chains" value="W=1-122"/>
</dbReference>
<dbReference type="PDB" id="7PIT">
    <property type="method" value="EM"/>
    <property type="resolution" value="5.70 A"/>
    <property type="chains" value="W=1-122"/>
</dbReference>
<dbReference type="PDBsum" id="7PAO"/>
<dbReference type="PDBsum" id="7PAQ"/>
<dbReference type="PDBsum" id="7PAR"/>
<dbReference type="PDBsum" id="7PIB"/>
<dbReference type="PDBsum" id="7PIS"/>
<dbReference type="PDBsum" id="7PIT"/>
<dbReference type="EMDB" id="EMD-13279"/>
<dbReference type="EMDB" id="EMD-13280"/>
<dbReference type="EMDB" id="EMD-13281"/>
<dbReference type="EMDB" id="EMD-13435"/>
<dbReference type="EMDB" id="EMD-13449"/>
<dbReference type="EMDB" id="EMD-13450"/>
<dbReference type="SMR" id="P75239"/>
<dbReference type="IntAct" id="P75239">
    <property type="interactions" value="5"/>
</dbReference>
<dbReference type="STRING" id="272634.MPN_539"/>
<dbReference type="EnsemblBacteria" id="AAB95951">
    <property type="protein sequence ID" value="AAB95951"/>
    <property type="gene ID" value="MPN_539"/>
</dbReference>
<dbReference type="KEGG" id="mpn:MPN_539"/>
<dbReference type="PATRIC" id="fig|272634.6.peg.601"/>
<dbReference type="HOGENOM" id="CLU_086499_3_2_14"/>
<dbReference type="OrthoDB" id="9811748at2"/>
<dbReference type="BioCyc" id="MPNE272634:G1GJ3-888-MONOMER"/>
<dbReference type="Proteomes" id="UP000000808">
    <property type="component" value="Chromosome"/>
</dbReference>
<dbReference type="GO" id="GO:0022625">
    <property type="term" value="C:cytosolic large ribosomal subunit"/>
    <property type="evidence" value="ECO:0007669"/>
    <property type="project" value="TreeGrafter"/>
</dbReference>
<dbReference type="GO" id="GO:0003729">
    <property type="term" value="F:mRNA binding"/>
    <property type="evidence" value="ECO:0007669"/>
    <property type="project" value="TreeGrafter"/>
</dbReference>
<dbReference type="GO" id="GO:0003735">
    <property type="term" value="F:structural constituent of ribosome"/>
    <property type="evidence" value="ECO:0007669"/>
    <property type="project" value="InterPro"/>
</dbReference>
<dbReference type="GO" id="GO:0006412">
    <property type="term" value="P:translation"/>
    <property type="evidence" value="ECO:0007669"/>
    <property type="project" value="UniProtKB-UniRule"/>
</dbReference>
<dbReference type="CDD" id="cd00387">
    <property type="entry name" value="Ribosomal_L7_L12"/>
    <property type="match status" value="1"/>
</dbReference>
<dbReference type="Gene3D" id="3.30.1390.10">
    <property type="match status" value="1"/>
</dbReference>
<dbReference type="Gene3D" id="1.20.5.710">
    <property type="entry name" value="Single helix bin"/>
    <property type="match status" value="1"/>
</dbReference>
<dbReference type="HAMAP" id="MF_00368">
    <property type="entry name" value="Ribosomal_bL12"/>
    <property type="match status" value="1"/>
</dbReference>
<dbReference type="InterPro" id="IPR000206">
    <property type="entry name" value="Ribosomal_bL12"/>
</dbReference>
<dbReference type="InterPro" id="IPR013823">
    <property type="entry name" value="Ribosomal_bL12_C"/>
</dbReference>
<dbReference type="InterPro" id="IPR014719">
    <property type="entry name" value="Ribosomal_bL12_C/ClpS-like"/>
</dbReference>
<dbReference type="InterPro" id="IPR008932">
    <property type="entry name" value="Ribosomal_bL12_oligo"/>
</dbReference>
<dbReference type="InterPro" id="IPR036235">
    <property type="entry name" value="Ribosomal_bL12_oligo_N_sf"/>
</dbReference>
<dbReference type="NCBIfam" id="TIGR00855">
    <property type="entry name" value="L12"/>
    <property type="match status" value="1"/>
</dbReference>
<dbReference type="PANTHER" id="PTHR45987">
    <property type="entry name" value="39S RIBOSOMAL PROTEIN L12"/>
    <property type="match status" value="1"/>
</dbReference>
<dbReference type="PANTHER" id="PTHR45987:SF4">
    <property type="entry name" value="LARGE RIBOSOMAL SUBUNIT PROTEIN BL12M"/>
    <property type="match status" value="1"/>
</dbReference>
<dbReference type="Pfam" id="PF00542">
    <property type="entry name" value="Ribosomal_L12"/>
    <property type="match status" value="1"/>
</dbReference>
<dbReference type="Pfam" id="PF16320">
    <property type="entry name" value="Ribosomal_L12_N"/>
    <property type="match status" value="1"/>
</dbReference>
<dbReference type="SUPFAM" id="SSF54736">
    <property type="entry name" value="ClpS-like"/>
    <property type="match status" value="1"/>
</dbReference>
<dbReference type="SUPFAM" id="SSF48300">
    <property type="entry name" value="Ribosomal protein L7/12, oligomerisation (N-terminal) domain"/>
    <property type="match status" value="1"/>
</dbReference>
<sequence>MAKLDKNQLIESLKEMTIMEIDEIIKAVEEAFGVSATPVVAAGAVGGTQEAASEVTVKVTGYTDNAKLAVLKLYREIAGVGLMEAKTAVEKLPCVVKQDIKPEEAEELKKRFVEVGATVEIK</sequence>
<feature type="chain" id="PRO_0000157553" description="Large ribosomal subunit protein bL12">
    <location>
        <begin position="1"/>
        <end position="122"/>
    </location>
</feature>
<organism>
    <name type="scientific">Mycoplasma pneumoniae (strain ATCC 29342 / M129 / Subtype 1)</name>
    <name type="common">Mycoplasmoides pneumoniae</name>
    <dbReference type="NCBI Taxonomy" id="272634"/>
    <lineage>
        <taxon>Bacteria</taxon>
        <taxon>Bacillati</taxon>
        <taxon>Mycoplasmatota</taxon>
        <taxon>Mycoplasmoidales</taxon>
        <taxon>Mycoplasmoidaceae</taxon>
        <taxon>Mycoplasmoides</taxon>
    </lineage>
</organism>
<evidence type="ECO:0000255" key="1">
    <source>
        <dbReference type="HAMAP-Rule" id="MF_00368"/>
    </source>
</evidence>
<evidence type="ECO:0000305" key="2"/>
<gene>
    <name evidence="1" type="primary">rplL</name>
    <name type="ordered locus">MPN_539</name>
    <name type="ORF">MP303</name>
</gene>